<evidence type="ECO:0000255" key="1">
    <source>
        <dbReference type="HAMAP-Rule" id="MF_01961"/>
    </source>
</evidence>
<evidence type="ECO:0000256" key="2">
    <source>
        <dbReference type="SAM" id="MobiDB-lite"/>
    </source>
</evidence>
<reference key="1">
    <citation type="journal article" date="2010" name="J. Bacteriol.">
        <title>Whole genome sequences of two Xylella fastidiosa strains (M12 and M23) causing almond leaf scorch disease in California.</title>
        <authorList>
            <person name="Chen J."/>
            <person name="Xie G."/>
            <person name="Han S."/>
            <person name="Chertkov O."/>
            <person name="Sims D."/>
            <person name="Civerolo E.L."/>
        </authorList>
    </citation>
    <scope>NUCLEOTIDE SEQUENCE [LARGE SCALE GENOMIC DNA]</scope>
    <source>
        <strain>M23</strain>
    </source>
</reference>
<comment type="function">
    <text evidence="1">Bifunctional enzyme with both catalase and broad-spectrum peroxidase activity.</text>
</comment>
<comment type="catalytic activity">
    <reaction evidence="1">
        <text>H2O2 + AH2 = A + 2 H2O</text>
        <dbReference type="Rhea" id="RHEA:30275"/>
        <dbReference type="ChEBI" id="CHEBI:13193"/>
        <dbReference type="ChEBI" id="CHEBI:15377"/>
        <dbReference type="ChEBI" id="CHEBI:16240"/>
        <dbReference type="ChEBI" id="CHEBI:17499"/>
        <dbReference type="EC" id="1.11.1.21"/>
    </reaction>
</comment>
<comment type="catalytic activity">
    <reaction evidence="1">
        <text>2 H2O2 = O2 + 2 H2O</text>
        <dbReference type="Rhea" id="RHEA:20309"/>
        <dbReference type="ChEBI" id="CHEBI:15377"/>
        <dbReference type="ChEBI" id="CHEBI:15379"/>
        <dbReference type="ChEBI" id="CHEBI:16240"/>
        <dbReference type="EC" id="1.11.1.21"/>
    </reaction>
</comment>
<comment type="cofactor">
    <cofactor evidence="1">
        <name>heme b</name>
        <dbReference type="ChEBI" id="CHEBI:60344"/>
    </cofactor>
    <text evidence="1">Binds 1 heme b (iron(II)-protoporphyrin IX) group per dimer.</text>
</comment>
<comment type="subunit">
    <text evidence="1">Homodimer or homotetramer.</text>
</comment>
<comment type="PTM">
    <text evidence="1">Formation of the three residue Trp-Tyr-Met cross-link is important for the catalase, but not the peroxidase activity of the enzyme.</text>
</comment>
<comment type="similarity">
    <text evidence="1">Belongs to the peroxidase family. Peroxidase/catalase subfamily.</text>
</comment>
<organism>
    <name type="scientific">Xylella fastidiosa (strain M23)</name>
    <dbReference type="NCBI Taxonomy" id="405441"/>
    <lineage>
        <taxon>Bacteria</taxon>
        <taxon>Pseudomonadati</taxon>
        <taxon>Pseudomonadota</taxon>
        <taxon>Gammaproteobacteria</taxon>
        <taxon>Lysobacterales</taxon>
        <taxon>Lysobacteraceae</taxon>
        <taxon>Xylella</taxon>
    </lineage>
</organism>
<dbReference type="EC" id="1.11.1.21" evidence="1"/>
<dbReference type="EMBL" id="CP001011">
    <property type="protein sequence ID" value="ACB92781.1"/>
    <property type="molecule type" value="Genomic_DNA"/>
</dbReference>
<dbReference type="SMR" id="B2I5Z2"/>
<dbReference type="KEGG" id="xfn:XfasM23_1363"/>
<dbReference type="HOGENOM" id="CLU_025424_2_0_6"/>
<dbReference type="Proteomes" id="UP000001698">
    <property type="component" value="Chromosome"/>
</dbReference>
<dbReference type="GO" id="GO:0005829">
    <property type="term" value="C:cytosol"/>
    <property type="evidence" value="ECO:0007669"/>
    <property type="project" value="TreeGrafter"/>
</dbReference>
<dbReference type="GO" id="GO:0004096">
    <property type="term" value="F:catalase activity"/>
    <property type="evidence" value="ECO:0007669"/>
    <property type="project" value="UniProtKB-UniRule"/>
</dbReference>
<dbReference type="GO" id="GO:0020037">
    <property type="term" value="F:heme binding"/>
    <property type="evidence" value="ECO:0007669"/>
    <property type="project" value="InterPro"/>
</dbReference>
<dbReference type="GO" id="GO:0046872">
    <property type="term" value="F:metal ion binding"/>
    <property type="evidence" value="ECO:0007669"/>
    <property type="project" value="UniProtKB-KW"/>
</dbReference>
<dbReference type="GO" id="GO:0070301">
    <property type="term" value="P:cellular response to hydrogen peroxide"/>
    <property type="evidence" value="ECO:0007669"/>
    <property type="project" value="TreeGrafter"/>
</dbReference>
<dbReference type="GO" id="GO:0042744">
    <property type="term" value="P:hydrogen peroxide catabolic process"/>
    <property type="evidence" value="ECO:0007669"/>
    <property type="project" value="UniProtKB-KW"/>
</dbReference>
<dbReference type="CDD" id="cd00649">
    <property type="entry name" value="catalase_peroxidase_1"/>
    <property type="match status" value="1"/>
</dbReference>
<dbReference type="CDD" id="cd08200">
    <property type="entry name" value="catalase_peroxidase_2"/>
    <property type="match status" value="1"/>
</dbReference>
<dbReference type="FunFam" id="1.10.420.10:FF:000002">
    <property type="entry name" value="Catalase-peroxidase"/>
    <property type="match status" value="1"/>
</dbReference>
<dbReference type="FunFam" id="1.10.420.10:FF:000004">
    <property type="entry name" value="Catalase-peroxidase"/>
    <property type="match status" value="1"/>
</dbReference>
<dbReference type="FunFam" id="1.10.520.10:FF:000002">
    <property type="entry name" value="Catalase-peroxidase"/>
    <property type="match status" value="1"/>
</dbReference>
<dbReference type="Gene3D" id="1.10.520.10">
    <property type="match status" value="2"/>
</dbReference>
<dbReference type="Gene3D" id="1.10.420.10">
    <property type="entry name" value="Peroxidase, domain 2"/>
    <property type="match status" value="2"/>
</dbReference>
<dbReference type="HAMAP" id="MF_01961">
    <property type="entry name" value="Catal_peroxid"/>
    <property type="match status" value="1"/>
</dbReference>
<dbReference type="InterPro" id="IPR000763">
    <property type="entry name" value="Catalase_peroxidase"/>
</dbReference>
<dbReference type="InterPro" id="IPR002016">
    <property type="entry name" value="Haem_peroxidase"/>
</dbReference>
<dbReference type="InterPro" id="IPR010255">
    <property type="entry name" value="Haem_peroxidase_sf"/>
</dbReference>
<dbReference type="InterPro" id="IPR019794">
    <property type="entry name" value="Peroxidases_AS"/>
</dbReference>
<dbReference type="InterPro" id="IPR019793">
    <property type="entry name" value="Peroxidases_heam-ligand_BS"/>
</dbReference>
<dbReference type="NCBIfam" id="TIGR00198">
    <property type="entry name" value="cat_per_HPI"/>
    <property type="match status" value="1"/>
</dbReference>
<dbReference type="NCBIfam" id="NF011635">
    <property type="entry name" value="PRK15061.1"/>
    <property type="match status" value="1"/>
</dbReference>
<dbReference type="PANTHER" id="PTHR30555:SF0">
    <property type="entry name" value="CATALASE-PEROXIDASE"/>
    <property type="match status" value="1"/>
</dbReference>
<dbReference type="PANTHER" id="PTHR30555">
    <property type="entry name" value="HYDROPEROXIDASE I, BIFUNCTIONAL CATALASE-PEROXIDASE"/>
    <property type="match status" value="1"/>
</dbReference>
<dbReference type="Pfam" id="PF00141">
    <property type="entry name" value="peroxidase"/>
    <property type="match status" value="2"/>
</dbReference>
<dbReference type="PRINTS" id="PR00460">
    <property type="entry name" value="BPEROXIDASE"/>
</dbReference>
<dbReference type="PRINTS" id="PR00458">
    <property type="entry name" value="PEROXIDASE"/>
</dbReference>
<dbReference type="SUPFAM" id="SSF48113">
    <property type="entry name" value="Heme-dependent peroxidases"/>
    <property type="match status" value="2"/>
</dbReference>
<dbReference type="PROSITE" id="PS00435">
    <property type="entry name" value="PEROXIDASE_1"/>
    <property type="match status" value="1"/>
</dbReference>
<dbReference type="PROSITE" id="PS00436">
    <property type="entry name" value="PEROXIDASE_2"/>
    <property type="match status" value="1"/>
</dbReference>
<dbReference type="PROSITE" id="PS50873">
    <property type="entry name" value="PEROXIDASE_4"/>
    <property type="match status" value="1"/>
</dbReference>
<feature type="chain" id="PRO_0000354961" description="Catalase-peroxidase">
    <location>
        <begin position="1"/>
        <end position="757"/>
    </location>
</feature>
<feature type="region of interest" description="Disordered" evidence="2">
    <location>
        <begin position="213"/>
        <end position="232"/>
    </location>
</feature>
<feature type="active site" description="Proton acceptor" evidence="1">
    <location>
        <position position="102"/>
    </location>
</feature>
<feature type="binding site" description="axial binding residue" evidence="1">
    <location>
        <position position="289"/>
    </location>
    <ligand>
        <name>heme b</name>
        <dbReference type="ChEBI" id="CHEBI:60344"/>
    </ligand>
    <ligandPart>
        <name>Fe</name>
        <dbReference type="ChEBI" id="CHEBI:18248"/>
    </ligandPart>
</feature>
<feature type="site" description="Transition state stabilizer" evidence="1">
    <location>
        <position position="98"/>
    </location>
</feature>
<feature type="cross-link" description="Tryptophyl-tyrosyl-methioninium (Trp-Tyr) (with M-274)" evidence="1">
    <location>
        <begin position="101"/>
        <end position="248"/>
    </location>
</feature>
<feature type="cross-link" description="Tryptophyl-tyrosyl-methioninium (Tyr-Met) (with W-101)" evidence="1">
    <location>
        <begin position="248"/>
        <end position="274"/>
    </location>
</feature>
<keyword id="KW-0349">Heme</keyword>
<keyword id="KW-0376">Hydrogen peroxide</keyword>
<keyword id="KW-0408">Iron</keyword>
<keyword id="KW-0479">Metal-binding</keyword>
<keyword id="KW-0560">Oxidoreductase</keyword>
<keyword id="KW-0575">Peroxidase</keyword>
<accession>B2I5Z2</accession>
<gene>
    <name evidence="1" type="primary">katG</name>
    <name type="ordered locus">XfasM23_1363</name>
</gene>
<proteinExistence type="inferred from homology"/>
<protein>
    <recommendedName>
        <fullName evidence="1">Catalase-peroxidase</fullName>
        <shortName evidence="1">CP</shortName>
        <ecNumber evidence="1">1.11.1.21</ecNumber>
    </recommendedName>
    <alternativeName>
        <fullName evidence="1">Peroxidase/catalase</fullName>
    </alternativeName>
</protein>
<sequence length="757" mass="83661">MRDMRASSPETTSAVKCPFNKTAVEGTHNKDWWPNQLRVDLLHQHSNKSNPLGETFDYAKEFQKLDYAALKRDLHALMTDSQDWWPADFGHYGGLFIRMAWHSAGTYRIGDGRGGAGRGQQRFAPLNSWPDNVSLDKARRLLWPIKKKYGQQISWADLIVLAGNVALESMGFKTFGFAGGRVDTWEPDQDVYWGREMTWLGGDVRYGAVSEGVHHPDEHRGAKEKASKNSDSRVLENPLAAVQMGLIYVNPEGPDGCPDPLASARDIRETFARMAMNDEETVALIAGGHTFGKTHGAAPADNVGPEPEAGELEQQGLGWHNRFGSGKAGDTITSGLEVTWTKTPTQWSNDFFEHLFGYEWELTKSPAGAYQWVAKDAAATIPHAHDPSKKLLPMMLTSDLALRFDPVYEKISRHFHAHPDQFADAFARAWFKLTHRDMGPRVRYLGPEVPAEELIWQDPVPKVSHVLVDAQDLLALKHKISASGLGISQLVSTAWASASTFRGSDKRGGANGGRLCLAPQSQWEVNQPQQLSVVLETLRRVQAEFNAQAGDKRISLADLIVLAGGVGVEQAAKRAGIVLEVPFVPGRTDALQEQTDVSSFAPLEPFADGFRNYVKEGCVVPSEHLLIDRAQLLTLTAPEMTVLIGGLRVLGANVGGVKHGVFTDRLGTLSNDFFINLLDMGTEWAPVSKERHLFEGRDRRTGALKWTGTRVDLVFGSNSLLRALAEVYAAVDAQEKFVRDFVAAWSKVMHLDRFDLV</sequence>
<name>KATG_XYLF2</name>